<keyword id="KW-0030">Aminoacyl-tRNA synthetase</keyword>
<keyword id="KW-0067">ATP-binding</keyword>
<keyword id="KW-0963">Cytoplasm</keyword>
<keyword id="KW-0436">Ligase</keyword>
<keyword id="KW-0547">Nucleotide-binding</keyword>
<keyword id="KW-0648">Protein biosynthesis</keyword>
<dbReference type="EC" id="6.1.1.21" evidence="1"/>
<dbReference type="EMBL" id="CP001401">
    <property type="protein sequence ID" value="ACP55811.1"/>
    <property type="molecule type" value="Genomic_DNA"/>
</dbReference>
<dbReference type="RefSeq" id="WP_012718992.1">
    <property type="nucleotide sequence ID" value="NC_012632.1"/>
</dbReference>
<dbReference type="SMR" id="C3MZH9"/>
<dbReference type="GeneID" id="84059217"/>
<dbReference type="KEGG" id="sim:M1627_1940"/>
<dbReference type="HOGENOM" id="CLU_025113_3_1_2"/>
<dbReference type="Proteomes" id="UP000002307">
    <property type="component" value="Chromosome"/>
</dbReference>
<dbReference type="GO" id="GO:0005737">
    <property type="term" value="C:cytoplasm"/>
    <property type="evidence" value="ECO:0007669"/>
    <property type="project" value="UniProtKB-SubCell"/>
</dbReference>
<dbReference type="GO" id="GO:0005524">
    <property type="term" value="F:ATP binding"/>
    <property type="evidence" value="ECO:0007669"/>
    <property type="project" value="UniProtKB-UniRule"/>
</dbReference>
<dbReference type="GO" id="GO:0004821">
    <property type="term" value="F:histidine-tRNA ligase activity"/>
    <property type="evidence" value="ECO:0007669"/>
    <property type="project" value="UniProtKB-UniRule"/>
</dbReference>
<dbReference type="GO" id="GO:0006427">
    <property type="term" value="P:histidyl-tRNA aminoacylation"/>
    <property type="evidence" value="ECO:0007669"/>
    <property type="project" value="UniProtKB-UniRule"/>
</dbReference>
<dbReference type="GO" id="GO:0000105">
    <property type="term" value="P:L-histidine biosynthetic process"/>
    <property type="evidence" value="ECO:0007669"/>
    <property type="project" value="InterPro"/>
</dbReference>
<dbReference type="CDD" id="cd00773">
    <property type="entry name" value="HisRS-like_core"/>
    <property type="match status" value="1"/>
</dbReference>
<dbReference type="FunFam" id="3.30.930.10:FF:000121">
    <property type="entry name" value="Histidine--tRNA ligase"/>
    <property type="match status" value="1"/>
</dbReference>
<dbReference type="Gene3D" id="3.40.50.800">
    <property type="entry name" value="Anticodon-binding domain"/>
    <property type="match status" value="1"/>
</dbReference>
<dbReference type="Gene3D" id="3.30.930.10">
    <property type="entry name" value="Bira Bifunctional Protein, Domain 2"/>
    <property type="match status" value="1"/>
</dbReference>
<dbReference type="HAMAP" id="MF_00127">
    <property type="entry name" value="His_tRNA_synth"/>
    <property type="match status" value="1"/>
</dbReference>
<dbReference type="HAMAP" id="MF_00125">
    <property type="entry name" value="HisZ"/>
    <property type="match status" value="1"/>
</dbReference>
<dbReference type="InterPro" id="IPR006195">
    <property type="entry name" value="aa-tRNA-synth_II"/>
</dbReference>
<dbReference type="InterPro" id="IPR045864">
    <property type="entry name" value="aa-tRNA-synth_II/BPL/LPL"/>
</dbReference>
<dbReference type="InterPro" id="IPR004154">
    <property type="entry name" value="Anticodon-bd"/>
</dbReference>
<dbReference type="InterPro" id="IPR036621">
    <property type="entry name" value="Anticodon-bd_dom_sf"/>
</dbReference>
<dbReference type="InterPro" id="IPR015807">
    <property type="entry name" value="His-tRNA-ligase"/>
</dbReference>
<dbReference type="InterPro" id="IPR041715">
    <property type="entry name" value="HisRS-like_core"/>
</dbReference>
<dbReference type="InterPro" id="IPR004516">
    <property type="entry name" value="HisRS/HisZ"/>
</dbReference>
<dbReference type="InterPro" id="IPR004517">
    <property type="entry name" value="HisZ"/>
</dbReference>
<dbReference type="NCBIfam" id="TIGR00442">
    <property type="entry name" value="hisS"/>
    <property type="match status" value="1"/>
</dbReference>
<dbReference type="PANTHER" id="PTHR43707:SF1">
    <property type="entry name" value="HISTIDINE--TRNA LIGASE, MITOCHONDRIAL-RELATED"/>
    <property type="match status" value="1"/>
</dbReference>
<dbReference type="PANTHER" id="PTHR43707">
    <property type="entry name" value="HISTIDYL-TRNA SYNTHETASE"/>
    <property type="match status" value="1"/>
</dbReference>
<dbReference type="Pfam" id="PF03129">
    <property type="entry name" value="HGTP_anticodon"/>
    <property type="match status" value="1"/>
</dbReference>
<dbReference type="Pfam" id="PF13393">
    <property type="entry name" value="tRNA-synt_His"/>
    <property type="match status" value="1"/>
</dbReference>
<dbReference type="PIRSF" id="PIRSF001549">
    <property type="entry name" value="His-tRNA_synth"/>
    <property type="match status" value="1"/>
</dbReference>
<dbReference type="SUPFAM" id="SSF52954">
    <property type="entry name" value="Class II aaRS ABD-related"/>
    <property type="match status" value="1"/>
</dbReference>
<dbReference type="SUPFAM" id="SSF55681">
    <property type="entry name" value="Class II aaRS and biotin synthetases"/>
    <property type="match status" value="1"/>
</dbReference>
<dbReference type="PROSITE" id="PS50862">
    <property type="entry name" value="AA_TRNA_LIGASE_II"/>
    <property type="match status" value="1"/>
</dbReference>
<reference key="1">
    <citation type="journal article" date="2009" name="Proc. Natl. Acad. Sci. U.S.A.">
        <title>Biogeography of the Sulfolobus islandicus pan-genome.</title>
        <authorList>
            <person name="Reno M.L."/>
            <person name="Held N.L."/>
            <person name="Fields C.J."/>
            <person name="Burke P.V."/>
            <person name="Whitaker R.J."/>
        </authorList>
    </citation>
    <scope>NUCLEOTIDE SEQUENCE [LARGE SCALE GENOMIC DNA]</scope>
    <source>
        <strain>M.16.27</strain>
    </source>
</reference>
<name>SYH_SACI3</name>
<sequence>MTKFETVRGMKDYIGIDAEKIRYLESIFRDLAIKYGYSEIITPVVEEFKLFALKGGEELRETMYVFKDKADRELSLRPEITPSVARAYIQNLQSSPKPIRLFYFGTVYRYDEPQYGRYREFRQAGIEMIGDSSILADLEVLDLLYNFYDKLNLSNDIIIKINNIGIFRKIMDKYNIEDNLQEHILHLIDKNKINEALDILEKNLKNKDIIDFFNKILTKKDTKLEDIESLAELEEVSRLDIKSEFLYLFRLSRILSNLNIKFKIDLGFVRGLAYYTGLIFEVLHPSVQFSIAGGGRYDKLIELYGGLPSPAIGFAIGVERTLLVIKDLKVEEPVNVIVIGMSEDTIPSMFMVSRILRKEEYKVVINTKDQPLSKLLPYYASQGFKVAIIIGKQELEKNMITVRNLITRKQISVPLENIEDAIKQTL</sequence>
<evidence type="ECO:0000255" key="1">
    <source>
        <dbReference type="HAMAP-Rule" id="MF_00127"/>
    </source>
</evidence>
<comment type="catalytic activity">
    <reaction evidence="1">
        <text>tRNA(His) + L-histidine + ATP = L-histidyl-tRNA(His) + AMP + diphosphate + H(+)</text>
        <dbReference type="Rhea" id="RHEA:17313"/>
        <dbReference type="Rhea" id="RHEA-COMP:9665"/>
        <dbReference type="Rhea" id="RHEA-COMP:9689"/>
        <dbReference type="ChEBI" id="CHEBI:15378"/>
        <dbReference type="ChEBI" id="CHEBI:30616"/>
        <dbReference type="ChEBI" id="CHEBI:33019"/>
        <dbReference type="ChEBI" id="CHEBI:57595"/>
        <dbReference type="ChEBI" id="CHEBI:78442"/>
        <dbReference type="ChEBI" id="CHEBI:78527"/>
        <dbReference type="ChEBI" id="CHEBI:456215"/>
        <dbReference type="EC" id="6.1.1.21"/>
    </reaction>
</comment>
<comment type="subcellular location">
    <subcellularLocation>
        <location evidence="1">Cytoplasm</location>
    </subcellularLocation>
</comment>
<comment type="similarity">
    <text evidence="1">Belongs to the class-II aminoacyl-tRNA synthetase family.</text>
</comment>
<gene>
    <name evidence="1" type="primary">hisS</name>
    <name type="ordered locus">M1627_1940</name>
</gene>
<protein>
    <recommendedName>
        <fullName evidence="1">Histidine--tRNA ligase</fullName>
        <ecNumber evidence="1">6.1.1.21</ecNumber>
    </recommendedName>
    <alternativeName>
        <fullName evidence="1">Histidyl-tRNA synthetase</fullName>
        <shortName evidence="1">HisRS</shortName>
    </alternativeName>
</protein>
<organism>
    <name type="scientific">Saccharolobus islandicus (strain M.16.27)</name>
    <name type="common">Sulfolobus islandicus</name>
    <dbReference type="NCBI Taxonomy" id="427318"/>
    <lineage>
        <taxon>Archaea</taxon>
        <taxon>Thermoproteota</taxon>
        <taxon>Thermoprotei</taxon>
        <taxon>Sulfolobales</taxon>
        <taxon>Sulfolobaceae</taxon>
        <taxon>Saccharolobus</taxon>
    </lineage>
</organism>
<proteinExistence type="inferred from homology"/>
<accession>C3MZH9</accession>
<feature type="chain" id="PRO_1000203148" description="Histidine--tRNA ligase">
    <location>
        <begin position="1"/>
        <end position="426"/>
    </location>
</feature>